<keyword id="KW-0028">Amino-acid biosynthesis</keyword>
<keyword id="KW-0057">Aromatic amino acid biosynthesis</keyword>
<keyword id="KW-0456">Lyase</keyword>
<keyword id="KW-1185">Reference proteome</keyword>
<keyword id="KW-0704">Schiff base</keyword>
<feature type="chain" id="PRO_0000325529" description="3-dehydroquinate dehydratase">
    <location>
        <begin position="1"/>
        <end position="264"/>
    </location>
</feature>
<feature type="active site" description="Proton donor/acceptor" evidence="1">
    <location>
        <position position="148"/>
    </location>
</feature>
<feature type="active site" description="Schiff-base intermediate with substrate" evidence="1">
    <location>
        <position position="175"/>
    </location>
</feature>
<feature type="binding site" evidence="1">
    <location>
        <begin position="50"/>
        <end position="52"/>
    </location>
    <ligand>
        <name>3-dehydroquinate</name>
        <dbReference type="ChEBI" id="CHEBI:32364"/>
    </ligand>
</feature>
<feature type="binding site" evidence="1">
    <location>
        <position position="86"/>
    </location>
    <ligand>
        <name>3-dehydroquinate</name>
        <dbReference type="ChEBI" id="CHEBI:32364"/>
    </ligand>
</feature>
<feature type="binding site" evidence="1">
    <location>
        <position position="217"/>
    </location>
    <ligand>
        <name>3-dehydroquinate</name>
        <dbReference type="ChEBI" id="CHEBI:32364"/>
    </ligand>
</feature>
<feature type="binding site" evidence="1">
    <location>
        <position position="236"/>
    </location>
    <ligand>
        <name>3-dehydroquinate</name>
        <dbReference type="ChEBI" id="CHEBI:32364"/>
    </ligand>
</feature>
<feature type="binding site" evidence="1">
    <location>
        <position position="240"/>
    </location>
    <ligand>
        <name>3-dehydroquinate</name>
        <dbReference type="ChEBI" id="CHEBI:32364"/>
    </ligand>
</feature>
<proteinExistence type="inferred from homology"/>
<reference key="1">
    <citation type="submission" date="2006-02" db="EMBL/GenBank/DDBJ databases">
        <title>Complete sequence of chromosome of Rhodoferax ferrireducens DSM 15236.</title>
        <authorList>
            <person name="Copeland A."/>
            <person name="Lucas S."/>
            <person name="Lapidus A."/>
            <person name="Barry K."/>
            <person name="Detter J.C."/>
            <person name="Glavina del Rio T."/>
            <person name="Hammon N."/>
            <person name="Israni S."/>
            <person name="Pitluck S."/>
            <person name="Brettin T."/>
            <person name="Bruce D."/>
            <person name="Han C."/>
            <person name="Tapia R."/>
            <person name="Gilna P."/>
            <person name="Kiss H."/>
            <person name="Schmutz J."/>
            <person name="Larimer F."/>
            <person name="Land M."/>
            <person name="Kyrpides N."/>
            <person name="Ivanova N."/>
            <person name="Richardson P."/>
        </authorList>
    </citation>
    <scope>NUCLEOTIDE SEQUENCE [LARGE SCALE GENOMIC DNA]</scope>
    <source>
        <strain>ATCC BAA-621 / DSM 15236 / T118</strain>
    </source>
</reference>
<accession>Q21VV5</accession>
<comment type="function">
    <text evidence="1">Involved in the third step of the chorismate pathway, which leads to the biosynthesis of aromatic amino acids. Catalyzes the cis-dehydration of 3-dehydroquinate (DHQ) and introduces the first double bond of the aromatic ring to yield 3-dehydroshikimate.</text>
</comment>
<comment type="catalytic activity">
    <reaction evidence="1">
        <text>3-dehydroquinate = 3-dehydroshikimate + H2O</text>
        <dbReference type="Rhea" id="RHEA:21096"/>
        <dbReference type="ChEBI" id="CHEBI:15377"/>
        <dbReference type="ChEBI" id="CHEBI:16630"/>
        <dbReference type="ChEBI" id="CHEBI:32364"/>
        <dbReference type="EC" id="4.2.1.10"/>
    </reaction>
</comment>
<comment type="pathway">
    <text evidence="1">Metabolic intermediate biosynthesis; chorismate biosynthesis; chorismate from D-erythrose 4-phosphate and phosphoenolpyruvate: step 3/7.</text>
</comment>
<comment type="subunit">
    <text evidence="1">Homodimer.</text>
</comment>
<comment type="similarity">
    <text evidence="1">Belongs to the type-I 3-dehydroquinase family.</text>
</comment>
<name>AROD_ALBFT</name>
<dbReference type="EC" id="4.2.1.10" evidence="1"/>
<dbReference type="EMBL" id="CP000267">
    <property type="protein sequence ID" value="ABD70098.1"/>
    <property type="molecule type" value="Genomic_DNA"/>
</dbReference>
<dbReference type="RefSeq" id="WP_011464666.1">
    <property type="nucleotide sequence ID" value="NC_007908.1"/>
</dbReference>
<dbReference type="SMR" id="Q21VV5"/>
<dbReference type="STRING" id="338969.Rfer_2381"/>
<dbReference type="KEGG" id="rfr:Rfer_2381"/>
<dbReference type="eggNOG" id="COG0710">
    <property type="taxonomic scope" value="Bacteria"/>
</dbReference>
<dbReference type="HOGENOM" id="CLU_064444_0_0_4"/>
<dbReference type="OrthoDB" id="9813659at2"/>
<dbReference type="UniPathway" id="UPA00053">
    <property type="reaction ID" value="UER00086"/>
</dbReference>
<dbReference type="Proteomes" id="UP000008332">
    <property type="component" value="Chromosome"/>
</dbReference>
<dbReference type="GO" id="GO:0003855">
    <property type="term" value="F:3-dehydroquinate dehydratase activity"/>
    <property type="evidence" value="ECO:0007669"/>
    <property type="project" value="UniProtKB-UniRule"/>
</dbReference>
<dbReference type="GO" id="GO:0046279">
    <property type="term" value="P:3,4-dihydroxybenzoate biosynthetic process"/>
    <property type="evidence" value="ECO:0007669"/>
    <property type="project" value="UniProtKB-ARBA"/>
</dbReference>
<dbReference type="GO" id="GO:0008652">
    <property type="term" value="P:amino acid biosynthetic process"/>
    <property type="evidence" value="ECO:0007669"/>
    <property type="project" value="UniProtKB-KW"/>
</dbReference>
<dbReference type="GO" id="GO:0009073">
    <property type="term" value="P:aromatic amino acid family biosynthetic process"/>
    <property type="evidence" value="ECO:0007669"/>
    <property type="project" value="UniProtKB-KW"/>
</dbReference>
<dbReference type="GO" id="GO:0009423">
    <property type="term" value="P:chorismate biosynthetic process"/>
    <property type="evidence" value="ECO:0007669"/>
    <property type="project" value="UniProtKB-UniRule"/>
</dbReference>
<dbReference type="CDD" id="cd00502">
    <property type="entry name" value="DHQase_I"/>
    <property type="match status" value="1"/>
</dbReference>
<dbReference type="FunFam" id="3.20.20.70:FF:000047">
    <property type="entry name" value="3-dehydroquinate dehydratase"/>
    <property type="match status" value="1"/>
</dbReference>
<dbReference type="Gene3D" id="3.20.20.70">
    <property type="entry name" value="Aldolase class I"/>
    <property type="match status" value="1"/>
</dbReference>
<dbReference type="HAMAP" id="MF_00214">
    <property type="entry name" value="AroD"/>
    <property type="match status" value="1"/>
</dbReference>
<dbReference type="InterPro" id="IPR013785">
    <property type="entry name" value="Aldolase_TIM"/>
</dbReference>
<dbReference type="InterPro" id="IPR001381">
    <property type="entry name" value="DHquinase_I"/>
</dbReference>
<dbReference type="InterPro" id="IPR050146">
    <property type="entry name" value="Type-I_3-dehydroquinase"/>
</dbReference>
<dbReference type="NCBIfam" id="TIGR01093">
    <property type="entry name" value="aroD"/>
    <property type="match status" value="1"/>
</dbReference>
<dbReference type="PANTHER" id="PTHR43699">
    <property type="entry name" value="3-DEHYDROQUINATE DEHYDRATASE"/>
    <property type="match status" value="1"/>
</dbReference>
<dbReference type="PANTHER" id="PTHR43699:SF1">
    <property type="entry name" value="3-DEHYDROQUINATE DEHYDRATASE"/>
    <property type="match status" value="1"/>
</dbReference>
<dbReference type="Pfam" id="PF01487">
    <property type="entry name" value="DHquinase_I"/>
    <property type="match status" value="1"/>
</dbReference>
<dbReference type="SUPFAM" id="SSF51569">
    <property type="entry name" value="Aldolase"/>
    <property type="match status" value="1"/>
</dbReference>
<protein>
    <recommendedName>
        <fullName evidence="1">3-dehydroquinate dehydratase</fullName>
        <shortName evidence="1">3-dehydroquinase</shortName>
        <ecNumber evidence="1">4.2.1.10</ecNumber>
    </recommendedName>
    <alternativeName>
        <fullName evidence="1">Type I DHQase</fullName>
    </alternativeName>
    <alternativeName>
        <fullName evidence="1">Type I dehydroquinase</fullName>
        <shortName evidence="1">DHQ1</shortName>
    </alternativeName>
</protein>
<sequence length="264" mass="27996">MQSSKPIESHGQPIAGGKLPLICVPLVGHTLDEVMAELAIVLPKKPDVLEWRVDFFESIGDVAAVIAAAKAIKSKAGDIPLLFTRRSVMEGGEKIALNEDQVIALYGAVCESKAIDLIDYEMANETANIAQVRAAAKSNDIKLVLSFHNFSSTPGLEALASKFLMADQLGADIAKVAVMPRDPNDVLILLAATQQASQKLRIPLISMSMGPYGSLTRLFGWAFGSALTFAVGARSSAPGQVPIEDLNTVLGILRKAMGDGQTTP</sequence>
<gene>
    <name evidence="1" type="primary">aroD</name>
    <name type="ordered locus">Rfer_2381</name>
</gene>
<evidence type="ECO:0000255" key="1">
    <source>
        <dbReference type="HAMAP-Rule" id="MF_00214"/>
    </source>
</evidence>
<organism>
    <name type="scientific">Albidiferax ferrireducens (strain ATCC BAA-621 / DSM 15236 / T118)</name>
    <name type="common">Rhodoferax ferrireducens</name>
    <dbReference type="NCBI Taxonomy" id="338969"/>
    <lineage>
        <taxon>Bacteria</taxon>
        <taxon>Pseudomonadati</taxon>
        <taxon>Pseudomonadota</taxon>
        <taxon>Betaproteobacteria</taxon>
        <taxon>Burkholderiales</taxon>
        <taxon>Comamonadaceae</taxon>
        <taxon>Rhodoferax</taxon>
    </lineage>
</organism>